<name>TTC33_XENLA</name>
<keyword id="KW-1185">Reference proteome</keyword>
<keyword id="KW-0677">Repeat</keyword>
<keyword id="KW-0802">TPR repeat</keyword>
<reference key="1">
    <citation type="submission" date="2004-12" db="EMBL/GenBank/DDBJ databases">
        <authorList>
            <consortium name="NIH - Xenopus Gene Collection (XGC) project"/>
        </authorList>
    </citation>
    <scope>NUCLEOTIDE SEQUENCE [LARGE SCALE MRNA]</scope>
    <source>
        <tissue>Testis</tissue>
    </source>
</reference>
<protein>
    <recommendedName>
        <fullName>Tetratricopeptide repeat protein 33</fullName>
        <shortName>TPR repeat protein 33</shortName>
    </recommendedName>
</protein>
<proteinExistence type="evidence at transcript level"/>
<feature type="chain" id="PRO_0000287518" description="Tetratricopeptide repeat protein 33">
    <location>
        <begin position="1"/>
        <end position="258"/>
    </location>
</feature>
<feature type="repeat" description="TPR 1">
    <location>
        <begin position="59"/>
        <end position="92"/>
    </location>
</feature>
<feature type="repeat" description="TPR 2">
    <location>
        <begin position="93"/>
        <end position="126"/>
    </location>
</feature>
<feature type="repeat" description="TPR 3">
    <location>
        <begin position="127"/>
        <end position="160"/>
    </location>
</feature>
<feature type="region of interest" description="Disordered" evidence="1">
    <location>
        <begin position="231"/>
        <end position="258"/>
    </location>
</feature>
<feature type="compositionally biased region" description="Basic and acidic residues" evidence="1">
    <location>
        <begin position="238"/>
        <end position="258"/>
    </location>
</feature>
<accession>Q5M990</accession>
<sequence length="258" mass="29148">MASFGWKRKIGEKVSKEVSQHFEEEAADESVVLDSHDVDWLHAIKRKKDVLLEDNVAKSKRLKEEGGLLAEDGRQKEALTKWDEAIQLTPGDAALYEMKAQVLMGVHEIFPAVQAAETAVQRNPHFVEAWQTLGRAQLSLGEITMAIRSFQIGLHICPANTELWEQDLNWARQLLLQKMDTESAERKRRDVNITREQIPDYDFESDEVVAACDAISQKQKMAAANKTVVVSASGSENLSDRKEDKVETNDSKEFIKAR</sequence>
<organism>
    <name type="scientific">Xenopus laevis</name>
    <name type="common">African clawed frog</name>
    <dbReference type="NCBI Taxonomy" id="8355"/>
    <lineage>
        <taxon>Eukaryota</taxon>
        <taxon>Metazoa</taxon>
        <taxon>Chordata</taxon>
        <taxon>Craniata</taxon>
        <taxon>Vertebrata</taxon>
        <taxon>Euteleostomi</taxon>
        <taxon>Amphibia</taxon>
        <taxon>Batrachia</taxon>
        <taxon>Anura</taxon>
        <taxon>Pipoidea</taxon>
        <taxon>Pipidae</taxon>
        <taxon>Xenopodinae</taxon>
        <taxon>Xenopus</taxon>
        <taxon>Xenopus</taxon>
    </lineage>
</organism>
<gene>
    <name type="primary">ttc33</name>
</gene>
<dbReference type="EMBL" id="BC087503">
    <property type="protein sequence ID" value="AAH87503.1"/>
    <property type="molecule type" value="mRNA"/>
</dbReference>
<dbReference type="RefSeq" id="NP_001088853.1">
    <property type="nucleotide sequence ID" value="NM_001095384.1"/>
</dbReference>
<dbReference type="SMR" id="Q5M990"/>
<dbReference type="DNASU" id="496164"/>
<dbReference type="GeneID" id="496164"/>
<dbReference type="KEGG" id="xla:496164"/>
<dbReference type="AGR" id="Xenbase:XB-GENE-956886"/>
<dbReference type="CTD" id="496164"/>
<dbReference type="Xenbase" id="XB-GENE-956886">
    <property type="gene designation" value="ttc33.L"/>
</dbReference>
<dbReference type="OMA" id="WQEDLKW"/>
<dbReference type="OrthoDB" id="2423701at2759"/>
<dbReference type="Proteomes" id="UP000186698">
    <property type="component" value="Chromosome 1L"/>
</dbReference>
<dbReference type="Bgee" id="496164">
    <property type="expression patterns" value="Expressed in muscle tissue and 19 other cell types or tissues"/>
</dbReference>
<dbReference type="Gene3D" id="1.25.40.10">
    <property type="entry name" value="Tetratricopeptide repeat domain"/>
    <property type="match status" value="1"/>
</dbReference>
<dbReference type="InterPro" id="IPR052658">
    <property type="entry name" value="TPR-containing"/>
</dbReference>
<dbReference type="InterPro" id="IPR011990">
    <property type="entry name" value="TPR-like_helical_dom_sf"/>
</dbReference>
<dbReference type="InterPro" id="IPR019734">
    <property type="entry name" value="TPR_rpt"/>
</dbReference>
<dbReference type="PANTHER" id="PTHR15544">
    <property type="entry name" value="OSMOSIS RESPONSIVE FACTOR"/>
    <property type="match status" value="1"/>
</dbReference>
<dbReference type="PANTHER" id="PTHR15544:SF0">
    <property type="entry name" value="TETRATRICOPEPTIDE REPEAT PROTEIN 33"/>
    <property type="match status" value="1"/>
</dbReference>
<dbReference type="SMART" id="SM00028">
    <property type="entry name" value="TPR"/>
    <property type="match status" value="3"/>
</dbReference>
<dbReference type="SUPFAM" id="SSF48452">
    <property type="entry name" value="TPR-like"/>
    <property type="match status" value="1"/>
</dbReference>
<dbReference type="PROSITE" id="PS50005">
    <property type="entry name" value="TPR"/>
    <property type="match status" value="3"/>
</dbReference>
<dbReference type="PROSITE" id="PS50293">
    <property type="entry name" value="TPR_REGION"/>
    <property type="match status" value="1"/>
</dbReference>
<evidence type="ECO:0000256" key="1">
    <source>
        <dbReference type="SAM" id="MobiDB-lite"/>
    </source>
</evidence>